<sequence>MTIFNNYEVWFVIGSQHLYGPEALRQVTQHAEHVVNALNAEAKLPCKLVLKPLGTTPDEITHICRDANYDDKCAGMVVWLHTFSPAKMWINGLTILNKPLLQFHTQFNASLPWDSIDMDFMNLNQTAHGGREFGFIGARMRQQHAVVTGHWQDSQAQKRIGSWMRQAVSKQDTRHLKVVRFGDNMREVAVTDGDKVAAQIKFGFSVNTWAVGDLVQVVNEISDGDVSALVDEYESSYRLTAAAQIKGDKRQNVLDAARIELGMKRFLEQGGFHAFTTTFEDLHGLKQLPGLAVQRLMQQGYGFAGEGDWKTAALLRIMKVMSTGLQGGTSFMEDYTYHFENGNDLVLGSHMLEVCPSIAVEEKPILDVQYLGIGGKADPARLIFNTRTGPAINASLIDLGDRFRLLVNCVDTVETPHSLPKLPVANALWKAQPDLPTASEAWIVAGGAHHTVFSHSLDLNDMRQFAELHDIELTVIDNDTRLPAFKDALRWNEVYYGSKR</sequence>
<dbReference type="EC" id="5.3.1.4" evidence="1"/>
<dbReference type="EMBL" id="CP000653">
    <property type="protein sequence ID" value="ABP59296.1"/>
    <property type="molecule type" value="Genomic_DNA"/>
</dbReference>
<dbReference type="RefSeq" id="WP_012016018.1">
    <property type="nucleotide sequence ID" value="NC_009436.1"/>
</dbReference>
<dbReference type="SMR" id="A4W6G6"/>
<dbReference type="STRING" id="399742.Ent638_0609"/>
<dbReference type="KEGG" id="ent:Ent638_0609"/>
<dbReference type="eggNOG" id="COG2160">
    <property type="taxonomic scope" value="Bacteria"/>
</dbReference>
<dbReference type="HOGENOM" id="CLU_045663_0_0_6"/>
<dbReference type="OrthoDB" id="9765600at2"/>
<dbReference type="UniPathway" id="UPA00145">
    <property type="reaction ID" value="UER00565"/>
</dbReference>
<dbReference type="Proteomes" id="UP000000230">
    <property type="component" value="Chromosome"/>
</dbReference>
<dbReference type="GO" id="GO:0005829">
    <property type="term" value="C:cytosol"/>
    <property type="evidence" value="ECO:0007669"/>
    <property type="project" value="TreeGrafter"/>
</dbReference>
<dbReference type="GO" id="GO:0008733">
    <property type="term" value="F:L-arabinose isomerase activity"/>
    <property type="evidence" value="ECO:0007669"/>
    <property type="project" value="UniProtKB-UniRule"/>
</dbReference>
<dbReference type="GO" id="GO:0030145">
    <property type="term" value="F:manganese ion binding"/>
    <property type="evidence" value="ECO:0007669"/>
    <property type="project" value="UniProtKB-UniRule"/>
</dbReference>
<dbReference type="GO" id="GO:0019569">
    <property type="term" value="P:L-arabinose catabolic process to xylulose 5-phosphate"/>
    <property type="evidence" value="ECO:0007669"/>
    <property type="project" value="UniProtKB-UniRule"/>
</dbReference>
<dbReference type="CDD" id="cd03557">
    <property type="entry name" value="L-arabinose_isomerase"/>
    <property type="match status" value="1"/>
</dbReference>
<dbReference type="FunFam" id="3.40.50.10940:FF:000001">
    <property type="entry name" value="L-arabinose isomerase"/>
    <property type="match status" value="1"/>
</dbReference>
<dbReference type="Gene3D" id="3.40.50.10940">
    <property type="match status" value="1"/>
</dbReference>
<dbReference type="HAMAP" id="MF_00519">
    <property type="entry name" value="Arabinose_Isome"/>
    <property type="match status" value="1"/>
</dbReference>
<dbReference type="InterPro" id="IPR024664">
    <property type="entry name" value="Ara_Isoase_C"/>
</dbReference>
<dbReference type="InterPro" id="IPR055390">
    <property type="entry name" value="AraA_central"/>
</dbReference>
<dbReference type="InterPro" id="IPR055389">
    <property type="entry name" value="AraA_N"/>
</dbReference>
<dbReference type="InterPro" id="IPR038583">
    <property type="entry name" value="AraA_N_sf"/>
</dbReference>
<dbReference type="InterPro" id="IPR004216">
    <property type="entry name" value="Fuc/Ara_isomerase_C"/>
</dbReference>
<dbReference type="InterPro" id="IPR009015">
    <property type="entry name" value="Fucose_isomerase_N/cen_sf"/>
</dbReference>
<dbReference type="InterPro" id="IPR003762">
    <property type="entry name" value="Lara_isomerase"/>
</dbReference>
<dbReference type="NCBIfam" id="NF002795">
    <property type="entry name" value="PRK02929.1"/>
    <property type="match status" value="1"/>
</dbReference>
<dbReference type="PANTHER" id="PTHR38464">
    <property type="entry name" value="L-ARABINOSE ISOMERASE"/>
    <property type="match status" value="1"/>
</dbReference>
<dbReference type="PANTHER" id="PTHR38464:SF1">
    <property type="entry name" value="L-ARABINOSE ISOMERASE"/>
    <property type="match status" value="1"/>
</dbReference>
<dbReference type="Pfam" id="PF24856">
    <property type="entry name" value="AraA_central"/>
    <property type="match status" value="1"/>
</dbReference>
<dbReference type="Pfam" id="PF02610">
    <property type="entry name" value="AraA_N"/>
    <property type="match status" value="1"/>
</dbReference>
<dbReference type="Pfam" id="PF11762">
    <property type="entry name" value="Arabinose_Iso_C"/>
    <property type="match status" value="1"/>
</dbReference>
<dbReference type="PIRSF" id="PIRSF001478">
    <property type="entry name" value="L-ara_isomerase"/>
    <property type="match status" value="1"/>
</dbReference>
<dbReference type="SUPFAM" id="SSF50443">
    <property type="entry name" value="FucI/AraA C-terminal domain-like"/>
    <property type="match status" value="1"/>
</dbReference>
<dbReference type="SUPFAM" id="SSF53743">
    <property type="entry name" value="FucI/AraA N-terminal and middle domains"/>
    <property type="match status" value="1"/>
</dbReference>
<proteinExistence type="inferred from homology"/>
<accession>A4W6G6</accession>
<reference key="1">
    <citation type="journal article" date="2010" name="PLoS Genet.">
        <title>Genome sequence of the plant growth promoting endophytic bacterium Enterobacter sp. 638.</title>
        <authorList>
            <person name="Taghavi S."/>
            <person name="van der Lelie D."/>
            <person name="Hoffman A."/>
            <person name="Zhang Y.B."/>
            <person name="Walla M.D."/>
            <person name="Vangronsveld J."/>
            <person name="Newman L."/>
            <person name="Monchy S."/>
        </authorList>
    </citation>
    <scope>NUCLEOTIDE SEQUENCE [LARGE SCALE GENOMIC DNA]</scope>
    <source>
        <strain>638</strain>
    </source>
</reference>
<feature type="chain" id="PRO_1000060914" description="L-arabinose isomerase">
    <location>
        <begin position="1"/>
        <end position="500"/>
    </location>
</feature>
<feature type="binding site" evidence="1">
    <location>
        <position position="306"/>
    </location>
    <ligand>
        <name>Mn(2+)</name>
        <dbReference type="ChEBI" id="CHEBI:29035"/>
    </ligand>
</feature>
<feature type="binding site" evidence="1">
    <location>
        <position position="333"/>
    </location>
    <ligand>
        <name>Mn(2+)</name>
        <dbReference type="ChEBI" id="CHEBI:29035"/>
    </ligand>
</feature>
<feature type="binding site" evidence="1">
    <location>
        <position position="350"/>
    </location>
    <ligand>
        <name>Mn(2+)</name>
        <dbReference type="ChEBI" id="CHEBI:29035"/>
    </ligand>
</feature>
<feature type="binding site" evidence="1">
    <location>
        <position position="450"/>
    </location>
    <ligand>
        <name>Mn(2+)</name>
        <dbReference type="ChEBI" id="CHEBI:29035"/>
    </ligand>
</feature>
<organism>
    <name type="scientific">Enterobacter sp. (strain 638)</name>
    <dbReference type="NCBI Taxonomy" id="399742"/>
    <lineage>
        <taxon>Bacteria</taxon>
        <taxon>Pseudomonadati</taxon>
        <taxon>Pseudomonadota</taxon>
        <taxon>Gammaproteobacteria</taxon>
        <taxon>Enterobacterales</taxon>
        <taxon>Enterobacteriaceae</taxon>
        <taxon>Enterobacter</taxon>
    </lineage>
</organism>
<evidence type="ECO:0000255" key="1">
    <source>
        <dbReference type="HAMAP-Rule" id="MF_00519"/>
    </source>
</evidence>
<name>ARAA_ENT38</name>
<keyword id="KW-0054">Arabinose catabolism</keyword>
<keyword id="KW-0119">Carbohydrate metabolism</keyword>
<keyword id="KW-0413">Isomerase</keyword>
<keyword id="KW-0464">Manganese</keyword>
<keyword id="KW-0479">Metal-binding</keyword>
<comment type="function">
    <text evidence="1">Catalyzes the conversion of L-arabinose to L-ribulose.</text>
</comment>
<comment type="catalytic activity">
    <reaction evidence="1">
        <text>beta-L-arabinopyranose = L-ribulose</text>
        <dbReference type="Rhea" id="RHEA:14821"/>
        <dbReference type="ChEBI" id="CHEBI:16880"/>
        <dbReference type="ChEBI" id="CHEBI:40886"/>
        <dbReference type="EC" id="5.3.1.4"/>
    </reaction>
</comment>
<comment type="cofactor">
    <cofactor evidence="1">
        <name>Mn(2+)</name>
        <dbReference type="ChEBI" id="CHEBI:29035"/>
    </cofactor>
    <text evidence="1">Binds 1 Mn(2+) ion per subunit.</text>
</comment>
<comment type="pathway">
    <text evidence="1">Carbohydrate degradation; L-arabinose degradation via L-ribulose; D-xylulose 5-phosphate from L-arabinose (bacterial route): step 1/3.</text>
</comment>
<comment type="subunit">
    <text evidence="1">Homohexamer.</text>
</comment>
<comment type="similarity">
    <text evidence="1">Belongs to the arabinose isomerase family.</text>
</comment>
<gene>
    <name evidence="1" type="primary">araA</name>
    <name type="ordered locus">Ent638_0609</name>
</gene>
<protein>
    <recommendedName>
        <fullName evidence="1">L-arabinose isomerase</fullName>
        <ecNumber evidence="1">5.3.1.4</ecNumber>
    </recommendedName>
</protein>